<comment type="function">
    <text evidence="1">Catalyzes the NADPH-dependent reduction of N-acetyl-5-glutamyl phosphate to yield N-acetyl-L-glutamate 5-semialdehyde.</text>
</comment>
<comment type="catalytic activity">
    <reaction evidence="1">
        <text>N-acetyl-L-glutamate 5-semialdehyde + phosphate + NADP(+) = N-acetyl-L-glutamyl 5-phosphate + NADPH + H(+)</text>
        <dbReference type="Rhea" id="RHEA:21588"/>
        <dbReference type="ChEBI" id="CHEBI:15378"/>
        <dbReference type="ChEBI" id="CHEBI:29123"/>
        <dbReference type="ChEBI" id="CHEBI:43474"/>
        <dbReference type="ChEBI" id="CHEBI:57783"/>
        <dbReference type="ChEBI" id="CHEBI:57936"/>
        <dbReference type="ChEBI" id="CHEBI:58349"/>
        <dbReference type="EC" id="1.2.1.38"/>
    </reaction>
</comment>
<comment type="pathway">
    <text evidence="1">Amino-acid biosynthesis; L-arginine biosynthesis; N(2)-acetyl-L-ornithine from L-glutamate: step 3/4.</text>
</comment>
<comment type="subcellular location">
    <subcellularLocation>
        <location evidence="1">Cytoplasm</location>
    </subcellularLocation>
</comment>
<comment type="similarity">
    <text evidence="1">Belongs to the NAGSA dehydrogenase family. Type 1 subfamily.</text>
</comment>
<evidence type="ECO:0000255" key="1">
    <source>
        <dbReference type="HAMAP-Rule" id="MF_00150"/>
    </source>
</evidence>
<proteinExistence type="inferred from homology"/>
<protein>
    <recommendedName>
        <fullName evidence="1">N-acetyl-gamma-glutamyl-phosphate reductase</fullName>
        <shortName evidence="1">AGPR</shortName>
        <ecNumber evidence="1">1.2.1.38</ecNumber>
    </recommendedName>
    <alternativeName>
        <fullName evidence="1">N-acetyl-glutamate semialdehyde dehydrogenase</fullName>
        <shortName evidence="1">NAGSA dehydrogenase</shortName>
    </alternativeName>
</protein>
<dbReference type="EC" id="1.2.1.38" evidence="1"/>
<dbReference type="EMBL" id="LT708304">
    <property type="protein sequence ID" value="SIU00283.1"/>
    <property type="molecule type" value="Genomic_DNA"/>
</dbReference>
<dbReference type="RefSeq" id="NP_855332.1">
    <property type="nucleotide sequence ID" value="NC_002945.3"/>
</dbReference>
<dbReference type="RefSeq" id="WP_003898960.1">
    <property type="nucleotide sequence ID" value="NC_002945.4"/>
</dbReference>
<dbReference type="SMR" id="P63563"/>
<dbReference type="GeneID" id="45425622"/>
<dbReference type="KEGG" id="mbo:BQ2027_MB1680"/>
<dbReference type="PATRIC" id="fig|233413.5.peg.1833"/>
<dbReference type="UniPathway" id="UPA00068">
    <property type="reaction ID" value="UER00108"/>
</dbReference>
<dbReference type="Proteomes" id="UP000001419">
    <property type="component" value="Chromosome"/>
</dbReference>
<dbReference type="GO" id="GO:0005737">
    <property type="term" value="C:cytoplasm"/>
    <property type="evidence" value="ECO:0007669"/>
    <property type="project" value="UniProtKB-SubCell"/>
</dbReference>
<dbReference type="GO" id="GO:0003942">
    <property type="term" value="F:N-acetyl-gamma-glutamyl-phosphate reductase activity"/>
    <property type="evidence" value="ECO:0007669"/>
    <property type="project" value="UniProtKB-UniRule"/>
</dbReference>
<dbReference type="GO" id="GO:0051287">
    <property type="term" value="F:NAD binding"/>
    <property type="evidence" value="ECO:0007669"/>
    <property type="project" value="InterPro"/>
</dbReference>
<dbReference type="GO" id="GO:0070401">
    <property type="term" value="F:NADP+ binding"/>
    <property type="evidence" value="ECO:0007669"/>
    <property type="project" value="InterPro"/>
</dbReference>
<dbReference type="GO" id="GO:0006526">
    <property type="term" value="P:L-arginine biosynthetic process"/>
    <property type="evidence" value="ECO:0007669"/>
    <property type="project" value="UniProtKB-UniRule"/>
</dbReference>
<dbReference type="CDD" id="cd24148">
    <property type="entry name" value="AGPR_1_actinobacAGPR_like"/>
    <property type="match status" value="1"/>
</dbReference>
<dbReference type="CDD" id="cd23934">
    <property type="entry name" value="AGPR_1_C"/>
    <property type="match status" value="1"/>
</dbReference>
<dbReference type="FunFam" id="3.30.360.10:FF:000014">
    <property type="entry name" value="N-acetyl-gamma-glutamyl-phosphate reductase"/>
    <property type="match status" value="1"/>
</dbReference>
<dbReference type="Gene3D" id="3.30.360.10">
    <property type="entry name" value="Dihydrodipicolinate Reductase, domain 2"/>
    <property type="match status" value="1"/>
</dbReference>
<dbReference type="Gene3D" id="3.40.50.720">
    <property type="entry name" value="NAD(P)-binding Rossmann-like Domain"/>
    <property type="match status" value="1"/>
</dbReference>
<dbReference type="HAMAP" id="MF_00150">
    <property type="entry name" value="ArgC_type1"/>
    <property type="match status" value="1"/>
</dbReference>
<dbReference type="InterPro" id="IPR023013">
    <property type="entry name" value="AGPR_AS"/>
</dbReference>
<dbReference type="InterPro" id="IPR000706">
    <property type="entry name" value="AGPR_type-1"/>
</dbReference>
<dbReference type="InterPro" id="IPR036291">
    <property type="entry name" value="NAD(P)-bd_dom_sf"/>
</dbReference>
<dbReference type="InterPro" id="IPR050085">
    <property type="entry name" value="NAGSA_dehydrogenase"/>
</dbReference>
<dbReference type="InterPro" id="IPR000534">
    <property type="entry name" value="Semialdehyde_DH_NAD-bd"/>
</dbReference>
<dbReference type="NCBIfam" id="TIGR01850">
    <property type="entry name" value="argC"/>
    <property type="match status" value="1"/>
</dbReference>
<dbReference type="PANTHER" id="PTHR32338:SF10">
    <property type="entry name" value="N-ACETYL-GAMMA-GLUTAMYL-PHOSPHATE REDUCTASE, CHLOROPLASTIC-RELATED"/>
    <property type="match status" value="1"/>
</dbReference>
<dbReference type="PANTHER" id="PTHR32338">
    <property type="entry name" value="N-ACETYL-GAMMA-GLUTAMYL-PHOSPHATE REDUCTASE, CHLOROPLASTIC-RELATED-RELATED"/>
    <property type="match status" value="1"/>
</dbReference>
<dbReference type="Pfam" id="PF01118">
    <property type="entry name" value="Semialdhyde_dh"/>
    <property type="match status" value="1"/>
</dbReference>
<dbReference type="Pfam" id="PF22698">
    <property type="entry name" value="Semialdhyde_dhC_1"/>
    <property type="match status" value="1"/>
</dbReference>
<dbReference type="SMART" id="SM00859">
    <property type="entry name" value="Semialdhyde_dh"/>
    <property type="match status" value="1"/>
</dbReference>
<dbReference type="SUPFAM" id="SSF55347">
    <property type="entry name" value="Glyceraldehyde-3-phosphate dehydrogenase-like, C-terminal domain"/>
    <property type="match status" value="1"/>
</dbReference>
<dbReference type="SUPFAM" id="SSF51735">
    <property type="entry name" value="NAD(P)-binding Rossmann-fold domains"/>
    <property type="match status" value="1"/>
</dbReference>
<dbReference type="PROSITE" id="PS01224">
    <property type="entry name" value="ARGC"/>
    <property type="match status" value="1"/>
</dbReference>
<gene>
    <name evidence="1" type="primary">argC</name>
    <name type="ordered locus">BQ2027_MB1680</name>
</gene>
<keyword id="KW-0028">Amino-acid biosynthesis</keyword>
<keyword id="KW-0055">Arginine biosynthesis</keyword>
<keyword id="KW-0963">Cytoplasm</keyword>
<keyword id="KW-0521">NADP</keyword>
<keyword id="KW-0560">Oxidoreductase</keyword>
<keyword id="KW-1185">Reference proteome</keyword>
<accession>P63563</accession>
<accession>A0A1R3Y125</accession>
<accession>P94987</accession>
<accession>X2BIT1</accession>
<organism>
    <name type="scientific">Mycobacterium bovis (strain ATCC BAA-935 / AF2122/97)</name>
    <dbReference type="NCBI Taxonomy" id="233413"/>
    <lineage>
        <taxon>Bacteria</taxon>
        <taxon>Bacillati</taxon>
        <taxon>Actinomycetota</taxon>
        <taxon>Actinomycetes</taxon>
        <taxon>Mycobacteriales</taxon>
        <taxon>Mycobacteriaceae</taxon>
        <taxon>Mycobacterium</taxon>
        <taxon>Mycobacterium tuberculosis complex</taxon>
    </lineage>
</organism>
<reference key="1">
    <citation type="journal article" date="2003" name="Proc. Natl. Acad. Sci. U.S.A.">
        <title>The complete genome sequence of Mycobacterium bovis.</title>
        <authorList>
            <person name="Garnier T."/>
            <person name="Eiglmeier K."/>
            <person name="Camus J.-C."/>
            <person name="Medina N."/>
            <person name="Mansoor H."/>
            <person name="Pryor M."/>
            <person name="Duthoy S."/>
            <person name="Grondin S."/>
            <person name="Lacroix C."/>
            <person name="Monsempe C."/>
            <person name="Simon S."/>
            <person name="Harris B."/>
            <person name="Atkin R."/>
            <person name="Doggett J."/>
            <person name="Mayes R."/>
            <person name="Keating L."/>
            <person name="Wheeler P.R."/>
            <person name="Parkhill J."/>
            <person name="Barrell B.G."/>
            <person name="Cole S.T."/>
            <person name="Gordon S.V."/>
            <person name="Hewinson R.G."/>
        </authorList>
    </citation>
    <scope>NUCLEOTIDE SEQUENCE [LARGE SCALE GENOMIC DNA]</scope>
    <source>
        <strain>ATCC BAA-935 / AF2122/97</strain>
    </source>
</reference>
<reference key="2">
    <citation type="journal article" date="2017" name="Genome Announc.">
        <title>Updated reference genome sequence and annotation of Mycobacterium bovis AF2122/97.</title>
        <authorList>
            <person name="Malone K.M."/>
            <person name="Farrell D."/>
            <person name="Stuber T.P."/>
            <person name="Schubert O.T."/>
            <person name="Aebersold R."/>
            <person name="Robbe-Austerman S."/>
            <person name="Gordon S.V."/>
        </authorList>
    </citation>
    <scope>NUCLEOTIDE SEQUENCE [LARGE SCALE GENOMIC DNA]</scope>
    <scope>GENOME REANNOTATION</scope>
    <source>
        <strain>ATCC BAA-935 / AF2122/97</strain>
    </source>
</reference>
<sequence length="352" mass="36304">MQNRQVANATKVAVAGASGYAGGEILRLLLGHPAYADGRLRIGALTAATSAGSTLGEHHPHLTPLAHRVVEPTEAAVLGGHDAVFLALPHGHSAVLAQQLSPETLIIDCGADFRLTDAAVWERFYGSSHAGSWPYGLPELPGARDQLRGTRRIAVPGCYPTAALLALFPALAADLIEPAVTVVAVSGTSGAGRAATTDLLGAEVIGSARAYNIAGVHRHTPEIAQGLRAVTDRDVSVSFTPVLIPASRGILATCTARTRSPLSQLRAAYEKAYHAEPFIYLMPEGQLPRTGAVIGSNAAHIAVAVDEDAQTFVAIAAIDNLVKGTAGAAVQSMNLALGWPETDGLSVVGVAP</sequence>
<name>ARGC_MYCBO</name>
<feature type="chain" id="PRO_0000112425" description="N-acetyl-gamma-glutamyl-phosphate reductase">
    <location>
        <begin position="1"/>
        <end position="352"/>
    </location>
</feature>
<feature type="active site" evidence="1">
    <location>
        <position position="158"/>
    </location>
</feature>